<name>RS12_LEPBA</name>
<sequence>MPTINQLIRIGREDQKKRTKSPALKACPQRRGVCTRVMTFTPKKPNSALRKVARVRLTTGIEVTAYIPGEGHNLQEHNVVLIRGGRVKDLPGVRYHIIRGTLDTLGVDKRRKGRSKYGAKRPKA</sequence>
<reference key="1">
    <citation type="journal article" date="2008" name="PLoS ONE">
        <title>Genome sequence of the saprophyte Leptospira biflexa provides insights into the evolution of Leptospira and the pathogenesis of leptospirosis.</title>
        <authorList>
            <person name="Picardeau M."/>
            <person name="Bulach D.M."/>
            <person name="Bouchier C."/>
            <person name="Zuerner R.L."/>
            <person name="Zidane N."/>
            <person name="Wilson P.J."/>
            <person name="Creno S."/>
            <person name="Kuczek E.S."/>
            <person name="Bommezzadri S."/>
            <person name="Davis J.C."/>
            <person name="McGrath A."/>
            <person name="Johnson M.J."/>
            <person name="Boursaux-Eude C."/>
            <person name="Seemann T."/>
            <person name="Rouy Z."/>
            <person name="Coppel R.L."/>
            <person name="Rood J.I."/>
            <person name="Lajus A."/>
            <person name="Davies J.K."/>
            <person name="Medigue C."/>
            <person name="Adler B."/>
        </authorList>
    </citation>
    <scope>NUCLEOTIDE SEQUENCE [LARGE SCALE GENOMIC DNA]</scope>
    <source>
        <strain>Patoc 1 / Ames</strain>
    </source>
</reference>
<gene>
    <name evidence="2" type="primary">rpsL</name>
    <name type="ordered locus">LBF_1918</name>
</gene>
<dbReference type="EMBL" id="CP000777">
    <property type="protein sequence ID" value="ABZ94422.1"/>
    <property type="molecule type" value="Genomic_DNA"/>
</dbReference>
<dbReference type="RefSeq" id="WP_004783543.1">
    <property type="nucleotide sequence ID" value="NC_010842.1"/>
</dbReference>
<dbReference type="SMR" id="B0SAF9"/>
<dbReference type="GeneID" id="93343082"/>
<dbReference type="KEGG" id="lbf:LBF_1918"/>
<dbReference type="HOGENOM" id="CLU_104295_1_2_12"/>
<dbReference type="GO" id="GO:0015935">
    <property type="term" value="C:small ribosomal subunit"/>
    <property type="evidence" value="ECO:0007669"/>
    <property type="project" value="InterPro"/>
</dbReference>
<dbReference type="GO" id="GO:0019843">
    <property type="term" value="F:rRNA binding"/>
    <property type="evidence" value="ECO:0007669"/>
    <property type="project" value="UniProtKB-UniRule"/>
</dbReference>
<dbReference type="GO" id="GO:0003735">
    <property type="term" value="F:structural constituent of ribosome"/>
    <property type="evidence" value="ECO:0007669"/>
    <property type="project" value="InterPro"/>
</dbReference>
<dbReference type="GO" id="GO:0000049">
    <property type="term" value="F:tRNA binding"/>
    <property type="evidence" value="ECO:0007669"/>
    <property type="project" value="UniProtKB-UniRule"/>
</dbReference>
<dbReference type="GO" id="GO:0006412">
    <property type="term" value="P:translation"/>
    <property type="evidence" value="ECO:0007669"/>
    <property type="project" value="UniProtKB-UniRule"/>
</dbReference>
<dbReference type="CDD" id="cd03368">
    <property type="entry name" value="Ribosomal_S12"/>
    <property type="match status" value="1"/>
</dbReference>
<dbReference type="FunFam" id="2.40.50.140:FF:000001">
    <property type="entry name" value="30S ribosomal protein S12"/>
    <property type="match status" value="1"/>
</dbReference>
<dbReference type="Gene3D" id="2.40.50.140">
    <property type="entry name" value="Nucleic acid-binding proteins"/>
    <property type="match status" value="1"/>
</dbReference>
<dbReference type="HAMAP" id="MF_00403_B">
    <property type="entry name" value="Ribosomal_uS12_B"/>
    <property type="match status" value="1"/>
</dbReference>
<dbReference type="InterPro" id="IPR012340">
    <property type="entry name" value="NA-bd_OB-fold"/>
</dbReference>
<dbReference type="InterPro" id="IPR006032">
    <property type="entry name" value="Ribosomal_uS12"/>
</dbReference>
<dbReference type="InterPro" id="IPR005679">
    <property type="entry name" value="Ribosomal_uS12_bac"/>
</dbReference>
<dbReference type="NCBIfam" id="TIGR00981">
    <property type="entry name" value="rpsL_bact"/>
    <property type="match status" value="1"/>
</dbReference>
<dbReference type="PANTHER" id="PTHR11652">
    <property type="entry name" value="30S RIBOSOMAL PROTEIN S12 FAMILY MEMBER"/>
    <property type="match status" value="1"/>
</dbReference>
<dbReference type="Pfam" id="PF00164">
    <property type="entry name" value="Ribosom_S12_S23"/>
    <property type="match status" value="1"/>
</dbReference>
<dbReference type="PIRSF" id="PIRSF002133">
    <property type="entry name" value="Ribosomal_S12/S23"/>
    <property type="match status" value="1"/>
</dbReference>
<dbReference type="PRINTS" id="PR01034">
    <property type="entry name" value="RIBOSOMALS12"/>
</dbReference>
<dbReference type="SUPFAM" id="SSF50249">
    <property type="entry name" value="Nucleic acid-binding proteins"/>
    <property type="match status" value="1"/>
</dbReference>
<dbReference type="PROSITE" id="PS00055">
    <property type="entry name" value="RIBOSOMAL_S12"/>
    <property type="match status" value="1"/>
</dbReference>
<protein>
    <recommendedName>
        <fullName evidence="2">Small ribosomal subunit protein uS12</fullName>
    </recommendedName>
    <alternativeName>
        <fullName evidence="3">30S ribosomal protein S12</fullName>
    </alternativeName>
</protein>
<proteinExistence type="inferred from homology"/>
<organism>
    <name type="scientific">Leptospira biflexa serovar Patoc (strain Patoc 1 / Ames)</name>
    <dbReference type="NCBI Taxonomy" id="355278"/>
    <lineage>
        <taxon>Bacteria</taxon>
        <taxon>Pseudomonadati</taxon>
        <taxon>Spirochaetota</taxon>
        <taxon>Spirochaetia</taxon>
        <taxon>Leptospirales</taxon>
        <taxon>Leptospiraceae</taxon>
        <taxon>Leptospira</taxon>
    </lineage>
</organism>
<evidence type="ECO:0000250" key="1"/>
<evidence type="ECO:0000255" key="2">
    <source>
        <dbReference type="HAMAP-Rule" id="MF_00403"/>
    </source>
</evidence>
<evidence type="ECO:0000305" key="3"/>
<keyword id="KW-0488">Methylation</keyword>
<keyword id="KW-0687">Ribonucleoprotein</keyword>
<keyword id="KW-0689">Ribosomal protein</keyword>
<keyword id="KW-0694">RNA-binding</keyword>
<keyword id="KW-0699">rRNA-binding</keyword>
<keyword id="KW-0820">tRNA-binding</keyword>
<feature type="chain" id="PRO_1000194185" description="Small ribosomal subunit protein uS12">
    <location>
        <begin position="1"/>
        <end position="124"/>
    </location>
</feature>
<feature type="modified residue" description="3-methylthioaspartic acid" evidence="1">
    <location>
        <position position="89"/>
    </location>
</feature>
<accession>B0SAF9</accession>
<comment type="function">
    <text evidence="2">With S4 and S5 plays an important role in translational accuracy.</text>
</comment>
<comment type="function">
    <text evidence="2">Interacts with and stabilizes bases of the 16S rRNA that are involved in tRNA selection in the A site and with the mRNA backbone. Located at the interface of the 30S and 50S subunits, it traverses the body of the 30S subunit contacting proteins on the other side and probably holding the rRNA structure together. The combined cluster of proteins S8, S12 and S17 appears to hold together the shoulder and platform of the 30S subunit.</text>
</comment>
<comment type="subunit">
    <text evidence="2">Part of the 30S ribosomal subunit. Contacts proteins S8 and S17. May interact with IF1 in the 30S initiation complex.</text>
</comment>
<comment type="similarity">
    <text evidence="2">Belongs to the universal ribosomal protein uS12 family.</text>
</comment>